<dbReference type="EMBL" id="BX897700">
    <property type="protein sequence ID" value="CAF26480.1"/>
    <property type="molecule type" value="Genomic_DNA"/>
</dbReference>
<dbReference type="RefSeq" id="WP_011179697.1">
    <property type="nucleotide sequence ID" value="NC_005955.1"/>
</dbReference>
<dbReference type="SMR" id="Q6FYZ6"/>
<dbReference type="GeneID" id="56533363"/>
<dbReference type="KEGG" id="bqu:BQ10120"/>
<dbReference type="eggNOG" id="COG0509">
    <property type="taxonomic scope" value="Bacteria"/>
</dbReference>
<dbReference type="HOGENOM" id="CLU_097408_2_0_5"/>
<dbReference type="OrthoDB" id="9796712at2"/>
<dbReference type="Proteomes" id="UP000000597">
    <property type="component" value="Chromosome"/>
</dbReference>
<dbReference type="GO" id="GO:0005829">
    <property type="term" value="C:cytosol"/>
    <property type="evidence" value="ECO:0007669"/>
    <property type="project" value="TreeGrafter"/>
</dbReference>
<dbReference type="GO" id="GO:0005960">
    <property type="term" value="C:glycine cleavage complex"/>
    <property type="evidence" value="ECO:0007669"/>
    <property type="project" value="InterPro"/>
</dbReference>
<dbReference type="GO" id="GO:0019464">
    <property type="term" value="P:glycine decarboxylation via glycine cleavage system"/>
    <property type="evidence" value="ECO:0007669"/>
    <property type="project" value="UniProtKB-UniRule"/>
</dbReference>
<dbReference type="CDD" id="cd06848">
    <property type="entry name" value="GCS_H"/>
    <property type="match status" value="1"/>
</dbReference>
<dbReference type="Gene3D" id="2.40.50.100">
    <property type="match status" value="1"/>
</dbReference>
<dbReference type="HAMAP" id="MF_00272">
    <property type="entry name" value="GcvH"/>
    <property type="match status" value="1"/>
</dbReference>
<dbReference type="InterPro" id="IPR003016">
    <property type="entry name" value="2-oxoA_DH_lipoyl-BS"/>
</dbReference>
<dbReference type="InterPro" id="IPR000089">
    <property type="entry name" value="Biotin_lipoyl"/>
</dbReference>
<dbReference type="InterPro" id="IPR002930">
    <property type="entry name" value="GCV_H"/>
</dbReference>
<dbReference type="InterPro" id="IPR033753">
    <property type="entry name" value="GCV_H/Fam206"/>
</dbReference>
<dbReference type="InterPro" id="IPR017453">
    <property type="entry name" value="GCV_H_sub"/>
</dbReference>
<dbReference type="InterPro" id="IPR011053">
    <property type="entry name" value="Single_hybrid_motif"/>
</dbReference>
<dbReference type="NCBIfam" id="TIGR00527">
    <property type="entry name" value="gcvH"/>
    <property type="match status" value="1"/>
</dbReference>
<dbReference type="NCBIfam" id="NF002270">
    <property type="entry name" value="PRK01202.1"/>
    <property type="match status" value="1"/>
</dbReference>
<dbReference type="PANTHER" id="PTHR11715">
    <property type="entry name" value="GLYCINE CLEAVAGE SYSTEM H PROTEIN"/>
    <property type="match status" value="1"/>
</dbReference>
<dbReference type="PANTHER" id="PTHR11715:SF3">
    <property type="entry name" value="GLYCINE CLEAVAGE SYSTEM H PROTEIN-RELATED"/>
    <property type="match status" value="1"/>
</dbReference>
<dbReference type="Pfam" id="PF01597">
    <property type="entry name" value="GCV_H"/>
    <property type="match status" value="1"/>
</dbReference>
<dbReference type="SUPFAM" id="SSF51230">
    <property type="entry name" value="Single hybrid motif"/>
    <property type="match status" value="1"/>
</dbReference>
<dbReference type="PROSITE" id="PS50968">
    <property type="entry name" value="BIOTINYL_LIPOYL"/>
    <property type="match status" value="1"/>
</dbReference>
<dbReference type="PROSITE" id="PS00189">
    <property type="entry name" value="LIPOYL"/>
    <property type="match status" value="1"/>
</dbReference>
<organism>
    <name type="scientific">Bartonella quintana (strain Toulouse)</name>
    <name type="common">Rochalimaea quintana</name>
    <dbReference type="NCBI Taxonomy" id="283165"/>
    <lineage>
        <taxon>Bacteria</taxon>
        <taxon>Pseudomonadati</taxon>
        <taxon>Pseudomonadota</taxon>
        <taxon>Alphaproteobacteria</taxon>
        <taxon>Hyphomicrobiales</taxon>
        <taxon>Bartonellaceae</taxon>
        <taxon>Bartonella</taxon>
    </lineage>
</organism>
<keyword id="KW-0450">Lipoyl</keyword>
<gene>
    <name evidence="1" type="primary">gcvH</name>
    <name type="ordered locus">BQ10120</name>
</gene>
<name>GCSH_BARQU</name>
<comment type="function">
    <text evidence="1">The glycine cleavage system catalyzes the degradation of glycine. The H protein shuttles the methylamine group of glycine from the P protein to the T protein.</text>
</comment>
<comment type="cofactor">
    <cofactor evidence="1">
        <name>(R)-lipoate</name>
        <dbReference type="ChEBI" id="CHEBI:83088"/>
    </cofactor>
    <text evidence="1">Binds 1 lipoyl cofactor covalently.</text>
</comment>
<comment type="subunit">
    <text evidence="1">The glycine cleavage system is composed of four proteins: P, T, L and H.</text>
</comment>
<comment type="similarity">
    <text evidence="1">Belongs to the GcvH family.</text>
</comment>
<accession>Q6FYZ6</accession>
<protein>
    <recommendedName>
        <fullName evidence="1">Glycine cleavage system H protein</fullName>
    </recommendedName>
</protein>
<evidence type="ECO:0000255" key="1">
    <source>
        <dbReference type="HAMAP-Rule" id="MF_00272"/>
    </source>
</evidence>
<evidence type="ECO:0000255" key="2">
    <source>
        <dbReference type="PROSITE-ProRule" id="PRU01066"/>
    </source>
</evidence>
<reference key="1">
    <citation type="journal article" date="2004" name="Proc. Natl. Acad. Sci. U.S.A.">
        <title>The louse-borne human pathogen Bartonella quintana is a genomic derivative of the zoonotic agent Bartonella henselae.</title>
        <authorList>
            <person name="Alsmark U.C.M."/>
            <person name="Frank A.C."/>
            <person name="Karlberg E.O."/>
            <person name="Legault B.-A."/>
            <person name="Ardell D.H."/>
            <person name="Canbaeck B."/>
            <person name="Eriksson A.-S."/>
            <person name="Naeslund A.K."/>
            <person name="Handley S.A."/>
            <person name="Huvet M."/>
            <person name="La Scola B."/>
            <person name="Holmberg M."/>
            <person name="Andersson S.G.E."/>
        </authorList>
    </citation>
    <scope>NUCLEOTIDE SEQUENCE [LARGE SCALE GENOMIC DNA]</scope>
    <source>
        <strain>Toulouse</strain>
    </source>
</reference>
<sequence>MSQIYFTQDHEWLSVEGQVVTVGITNYAQEQLGDLVFVDLPQSGTKLSKGDAAAVVESVKAASDVYAPLDGEVVEINEALANSPELVNQKAEKEGWLWKMTVQDETQLEGLLDEAAYKTLIG</sequence>
<proteinExistence type="inferred from homology"/>
<feature type="chain" id="PRO_0000302356" description="Glycine cleavage system H protein">
    <location>
        <begin position="1"/>
        <end position="122"/>
    </location>
</feature>
<feature type="domain" description="Lipoyl-binding" evidence="2">
    <location>
        <begin position="19"/>
        <end position="101"/>
    </location>
</feature>
<feature type="modified residue" description="N6-lipoyllysine" evidence="1">
    <location>
        <position position="60"/>
    </location>
</feature>